<evidence type="ECO:0000255" key="1">
    <source>
        <dbReference type="HAMAP-Rule" id="MF_00553"/>
    </source>
</evidence>
<feature type="chain" id="PRO_1000017924" description="Proteasome-activating nucleotidase">
    <location>
        <begin position="1"/>
        <end position="412"/>
    </location>
</feature>
<feature type="region of interest" description="Docks into pockets in the proteasome alpha-ring to cause gate opening" evidence="1">
    <location>
        <begin position="410"/>
        <end position="412"/>
    </location>
</feature>
<feature type="coiled-coil region" evidence="1">
    <location>
        <begin position="15"/>
        <end position="73"/>
    </location>
</feature>
<feature type="binding site" evidence="1">
    <location>
        <begin position="197"/>
        <end position="202"/>
    </location>
    <ligand>
        <name>ATP</name>
        <dbReference type="ChEBI" id="CHEBI:30616"/>
    </ligand>
</feature>
<feature type="binding site" evidence="1">
    <location>
        <position position="336"/>
    </location>
    <ligand>
        <name>ATP</name>
        <dbReference type="ChEBI" id="CHEBI:30616"/>
    </ligand>
</feature>
<reference key="1">
    <citation type="journal article" date="2009" name="Stand. Genomic Sci.">
        <title>Complete genome sequence of Methanoculleus marisnigri Romesser et al. 1981 type strain JR1.</title>
        <authorList>
            <person name="Anderson I.J."/>
            <person name="Sieprawska-Lupa M."/>
            <person name="Lapidus A."/>
            <person name="Nolan M."/>
            <person name="Copeland A."/>
            <person name="Glavina Del Rio T."/>
            <person name="Tice H."/>
            <person name="Dalin E."/>
            <person name="Barry K."/>
            <person name="Saunders E."/>
            <person name="Han C."/>
            <person name="Brettin T."/>
            <person name="Detter J.C."/>
            <person name="Bruce D."/>
            <person name="Mikhailova N."/>
            <person name="Pitluck S."/>
            <person name="Hauser L."/>
            <person name="Land M."/>
            <person name="Lucas S."/>
            <person name="Richardson P."/>
            <person name="Whitman W.B."/>
            <person name="Kyrpides N.C."/>
        </authorList>
    </citation>
    <scope>NUCLEOTIDE SEQUENCE [LARGE SCALE GENOMIC DNA]</scope>
    <source>
        <strain>ATCC 35101 / DSM 1498 / JR1</strain>
    </source>
</reference>
<organism>
    <name type="scientific">Methanoculleus marisnigri (strain ATCC 35101 / DSM 1498 / JR1)</name>
    <dbReference type="NCBI Taxonomy" id="368407"/>
    <lineage>
        <taxon>Archaea</taxon>
        <taxon>Methanobacteriati</taxon>
        <taxon>Methanobacteriota</taxon>
        <taxon>Stenosarchaea group</taxon>
        <taxon>Methanomicrobia</taxon>
        <taxon>Methanomicrobiales</taxon>
        <taxon>Methanomicrobiaceae</taxon>
        <taxon>Methanoculleus</taxon>
    </lineage>
</organism>
<protein>
    <recommendedName>
        <fullName evidence="1">Proteasome-activating nucleotidase</fullName>
        <shortName evidence="1">PAN</shortName>
    </recommendedName>
    <alternativeName>
        <fullName evidence="1">Proteasomal ATPase</fullName>
    </alternativeName>
    <alternativeName>
        <fullName evidence="1">Proteasome regulatory ATPase</fullName>
    </alternativeName>
    <alternativeName>
        <fullName evidence="1">Proteasome regulatory particle</fullName>
    </alternativeName>
</protein>
<name>PAN_METMJ</name>
<accession>A3CV35</accession>
<sequence>MGDIARQAPDKDTGEDIYQYLLERITNLENRNLELREQFRQMESEKRYVETQKIRYERELRKLKSEIEQLRSPPLVIGTVTDVIDNSRVIVRSSAGPRFLVRTSQLIDPDLLKPGVRCTLNQQSLAIVDVLPTSYDAQIYGMELVESPEETYENIGGLEPQIEEIREAVELPLTKPQLFEKVGISPPKGVLLYGPPGTGKTLLARAVAHQTNAHFLRVVGSELVQKYIGEGARLVRELFDLAKQRAPSIIFIDEIDAIGAHRNDSTTSGDREVQRTLMQLLAEMDGFDNRGDVKIVAATNRIDILDRALLRPGRFDRMIEIPLPDHQGRLAILKIHTQYMNIGEDVNLSEVSRLTEGKNGADLRAICMEAGMFAIRMERDAVNSEDFMKAIDKLALDFDRHHFHTTFGEMFA</sequence>
<proteinExistence type="inferred from homology"/>
<dbReference type="EMBL" id="CP000562">
    <property type="protein sequence ID" value="ABN57235.1"/>
    <property type="molecule type" value="Genomic_DNA"/>
</dbReference>
<dbReference type="RefSeq" id="WP_011844146.1">
    <property type="nucleotide sequence ID" value="NC_009051.1"/>
</dbReference>
<dbReference type="SMR" id="A3CV35"/>
<dbReference type="STRING" id="368407.Memar_1305"/>
<dbReference type="GeneID" id="4847412"/>
<dbReference type="KEGG" id="mem:Memar_1305"/>
<dbReference type="eggNOG" id="arCOG01306">
    <property type="taxonomic scope" value="Archaea"/>
</dbReference>
<dbReference type="HOGENOM" id="CLU_000688_2_0_2"/>
<dbReference type="OrthoDB" id="77269at2157"/>
<dbReference type="Proteomes" id="UP000002146">
    <property type="component" value="Chromosome"/>
</dbReference>
<dbReference type="GO" id="GO:0005737">
    <property type="term" value="C:cytoplasm"/>
    <property type="evidence" value="ECO:0007669"/>
    <property type="project" value="UniProtKB-SubCell"/>
</dbReference>
<dbReference type="GO" id="GO:0022623">
    <property type="term" value="C:proteasome-activating nucleotidase complex"/>
    <property type="evidence" value="ECO:0007669"/>
    <property type="project" value="UniProtKB-UniRule"/>
</dbReference>
<dbReference type="GO" id="GO:0005524">
    <property type="term" value="F:ATP binding"/>
    <property type="evidence" value="ECO:0007669"/>
    <property type="project" value="UniProtKB-UniRule"/>
</dbReference>
<dbReference type="GO" id="GO:0016887">
    <property type="term" value="F:ATP hydrolysis activity"/>
    <property type="evidence" value="ECO:0007669"/>
    <property type="project" value="UniProtKB-UniRule"/>
</dbReference>
<dbReference type="GO" id="GO:0010498">
    <property type="term" value="P:proteasomal protein catabolic process"/>
    <property type="evidence" value="ECO:0007669"/>
    <property type="project" value="UniProtKB-UniRule"/>
</dbReference>
<dbReference type="GO" id="GO:0043335">
    <property type="term" value="P:protein unfolding"/>
    <property type="evidence" value="ECO:0007669"/>
    <property type="project" value="UniProtKB-UniRule"/>
</dbReference>
<dbReference type="CDD" id="cd19502">
    <property type="entry name" value="RecA-like_PAN_like"/>
    <property type="match status" value="1"/>
</dbReference>
<dbReference type="FunFam" id="3.40.50.300:FF:000030">
    <property type="entry name" value="26S protease regulatory subunit 8"/>
    <property type="match status" value="1"/>
</dbReference>
<dbReference type="Gene3D" id="1.10.8.60">
    <property type="match status" value="1"/>
</dbReference>
<dbReference type="Gene3D" id="2.40.50.140">
    <property type="entry name" value="Nucleic acid-binding proteins"/>
    <property type="match status" value="1"/>
</dbReference>
<dbReference type="Gene3D" id="3.40.50.300">
    <property type="entry name" value="P-loop containing nucleotide triphosphate hydrolases"/>
    <property type="match status" value="1"/>
</dbReference>
<dbReference type="HAMAP" id="MF_00553">
    <property type="entry name" value="PAN"/>
    <property type="match status" value="1"/>
</dbReference>
<dbReference type="InterPro" id="IPR050221">
    <property type="entry name" value="26S_Proteasome_ATPase"/>
</dbReference>
<dbReference type="InterPro" id="IPR003593">
    <property type="entry name" value="AAA+_ATPase"/>
</dbReference>
<dbReference type="InterPro" id="IPR041569">
    <property type="entry name" value="AAA_lid_3"/>
</dbReference>
<dbReference type="InterPro" id="IPR003959">
    <property type="entry name" value="ATPase_AAA_core"/>
</dbReference>
<dbReference type="InterPro" id="IPR003960">
    <property type="entry name" value="ATPase_AAA_CS"/>
</dbReference>
<dbReference type="InterPro" id="IPR012340">
    <property type="entry name" value="NA-bd_OB-fold"/>
</dbReference>
<dbReference type="InterPro" id="IPR023501">
    <property type="entry name" value="Nucleotidase_PAN"/>
</dbReference>
<dbReference type="InterPro" id="IPR027417">
    <property type="entry name" value="P-loop_NTPase"/>
</dbReference>
<dbReference type="InterPro" id="IPR032501">
    <property type="entry name" value="Prot_ATP_ID_OB_2nd"/>
</dbReference>
<dbReference type="NCBIfam" id="NF003069">
    <property type="entry name" value="PRK03992.1"/>
    <property type="match status" value="1"/>
</dbReference>
<dbReference type="NCBIfam" id="TIGR01242">
    <property type="entry name" value="proteasome-activating nucleotidase"/>
    <property type="match status" value="1"/>
</dbReference>
<dbReference type="PANTHER" id="PTHR23073">
    <property type="entry name" value="26S PROTEASOME REGULATORY SUBUNIT"/>
    <property type="match status" value="1"/>
</dbReference>
<dbReference type="Pfam" id="PF00004">
    <property type="entry name" value="AAA"/>
    <property type="match status" value="1"/>
</dbReference>
<dbReference type="Pfam" id="PF17862">
    <property type="entry name" value="AAA_lid_3"/>
    <property type="match status" value="1"/>
</dbReference>
<dbReference type="Pfam" id="PF16450">
    <property type="entry name" value="Prot_ATP_ID_OB_C"/>
    <property type="match status" value="1"/>
</dbReference>
<dbReference type="SMART" id="SM00382">
    <property type="entry name" value="AAA"/>
    <property type="match status" value="1"/>
</dbReference>
<dbReference type="SUPFAM" id="SSF52540">
    <property type="entry name" value="P-loop containing nucleoside triphosphate hydrolases"/>
    <property type="match status" value="1"/>
</dbReference>
<dbReference type="PROSITE" id="PS00674">
    <property type="entry name" value="AAA"/>
    <property type="match status" value="1"/>
</dbReference>
<comment type="function">
    <text evidence="1">ATPase which is responsible for recognizing, binding, unfolding and translocation of substrate proteins into the archaeal 20S proteasome core particle. Is essential for opening the gate of the 20S proteasome via an interaction with its C-terminus, thereby allowing substrate entry and access to the site of proteolysis. Thus, the C-termini of the proteasomal ATPase function like a 'key in a lock' to induce gate opening and therefore regulate proteolysis. Unfolding activity requires energy from ATP hydrolysis, whereas ATP binding alone promotes ATPase-20S proteasome association which triggers gate opening, and supports translocation of unfolded substrates.</text>
</comment>
<comment type="subunit">
    <text evidence="1">Homohexamer. The hexameric complex has a two-ring architecture resembling a top hat that caps the 20S proteasome core at one or both ends. Upon ATP-binding, the C-terminus of PAN interacts with the alpha-rings of the proteasome core by binding to the intersubunit pockets.</text>
</comment>
<comment type="subcellular location">
    <subcellularLocation>
        <location evidence="1">Cytoplasm</location>
    </subcellularLocation>
</comment>
<comment type="domain">
    <text evidence="1">Consists of three main regions, an N-terminal coiled-coil domain that may assist in substrate recognition, an interdomain involved in PAN hexamerization, and a C-terminal ATPase domain of the AAA type.</text>
</comment>
<comment type="similarity">
    <text evidence="1">Belongs to the AAA ATPase family.</text>
</comment>
<gene>
    <name evidence="1" type="primary">pan</name>
    <name type="ordered locus">Memar_1305</name>
</gene>
<keyword id="KW-0067">ATP-binding</keyword>
<keyword id="KW-0143">Chaperone</keyword>
<keyword id="KW-0175">Coiled coil</keyword>
<keyword id="KW-0963">Cytoplasm</keyword>
<keyword id="KW-0547">Nucleotide-binding</keyword>
<keyword id="KW-0647">Proteasome</keyword>